<organism>
    <name type="scientific">Escherichia coli O6:K15:H31 (strain 536 / UPEC)</name>
    <dbReference type="NCBI Taxonomy" id="362663"/>
    <lineage>
        <taxon>Bacteria</taxon>
        <taxon>Pseudomonadati</taxon>
        <taxon>Pseudomonadota</taxon>
        <taxon>Gammaproteobacteria</taxon>
        <taxon>Enterobacterales</taxon>
        <taxon>Enterobacteriaceae</taxon>
        <taxon>Escherichia</taxon>
    </lineage>
</organism>
<comment type="function">
    <text evidence="1">Involved in transcription antitermination. Required for transcription of ribosomal RNA (rRNA) genes. Binds specifically to the boxA antiterminator sequence of the ribosomal RNA (rrn) operons.</text>
</comment>
<comment type="similarity">
    <text evidence="1">Belongs to the NusB family.</text>
</comment>
<protein>
    <recommendedName>
        <fullName evidence="1">Transcription antitermination protein NusB</fullName>
    </recommendedName>
    <alternativeName>
        <fullName evidence="1">Antitermination factor NusB</fullName>
    </alternativeName>
</protein>
<proteinExistence type="inferred from homology"/>
<dbReference type="EMBL" id="CP000247">
    <property type="protein sequence ID" value="ABG68506.1"/>
    <property type="molecule type" value="Genomic_DNA"/>
</dbReference>
<dbReference type="RefSeq" id="WP_000801125.1">
    <property type="nucleotide sequence ID" value="NC_008253.1"/>
</dbReference>
<dbReference type="SMR" id="Q0TKM5"/>
<dbReference type="GeneID" id="93777044"/>
<dbReference type="KEGG" id="ecp:ECP_0475"/>
<dbReference type="HOGENOM" id="CLU_087843_4_1_6"/>
<dbReference type="Proteomes" id="UP000009182">
    <property type="component" value="Chromosome"/>
</dbReference>
<dbReference type="GO" id="GO:0005829">
    <property type="term" value="C:cytosol"/>
    <property type="evidence" value="ECO:0007669"/>
    <property type="project" value="TreeGrafter"/>
</dbReference>
<dbReference type="GO" id="GO:0003723">
    <property type="term" value="F:RNA binding"/>
    <property type="evidence" value="ECO:0007669"/>
    <property type="project" value="UniProtKB-UniRule"/>
</dbReference>
<dbReference type="GO" id="GO:0006353">
    <property type="term" value="P:DNA-templated transcription termination"/>
    <property type="evidence" value="ECO:0007669"/>
    <property type="project" value="UniProtKB-UniRule"/>
</dbReference>
<dbReference type="GO" id="GO:0031564">
    <property type="term" value="P:transcription antitermination"/>
    <property type="evidence" value="ECO:0007669"/>
    <property type="project" value="UniProtKB-KW"/>
</dbReference>
<dbReference type="CDD" id="cd00619">
    <property type="entry name" value="Terminator_NusB"/>
    <property type="match status" value="1"/>
</dbReference>
<dbReference type="FunFam" id="1.10.940.10:FF:000001">
    <property type="entry name" value="Transcription antitermination factor NusB"/>
    <property type="match status" value="1"/>
</dbReference>
<dbReference type="Gene3D" id="1.10.940.10">
    <property type="entry name" value="NusB-like"/>
    <property type="match status" value="1"/>
</dbReference>
<dbReference type="HAMAP" id="MF_00073">
    <property type="entry name" value="NusB"/>
    <property type="match status" value="1"/>
</dbReference>
<dbReference type="InterPro" id="IPR035926">
    <property type="entry name" value="NusB-like_sf"/>
</dbReference>
<dbReference type="InterPro" id="IPR011605">
    <property type="entry name" value="NusB_fam"/>
</dbReference>
<dbReference type="InterPro" id="IPR006027">
    <property type="entry name" value="NusB_RsmB_TIM44"/>
</dbReference>
<dbReference type="NCBIfam" id="TIGR01951">
    <property type="entry name" value="nusB"/>
    <property type="match status" value="1"/>
</dbReference>
<dbReference type="PANTHER" id="PTHR11078:SF3">
    <property type="entry name" value="ANTITERMINATION NUSB DOMAIN-CONTAINING PROTEIN"/>
    <property type="match status" value="1"/>
</dbReference>
<dbReference type="PANTHER" id="PTHR11078">
    <property type="entry name" value="N UTILIZATION SUBSTANCE PROTEIN B-RELATED"/>
    <property type="match status" value="1"/>
</dbReference>
<dbReference type="Pfam" id="PF01029">
    <property type="entry name" value="NusB"/>
    <property type="match status" value="1"/>
</dbReference>
<dbReference type="SUPFAM" id="SSF48013">
    <property type="entry name" value="NusB-like"/>
    <property type="match status" value="1"/>
</dbReference>
<name>NUSB_ECOL5</name>
<feature type="chain" id="PRO_0000265521" description="Transcription antitermination protein NusB">
    <location>
        <begin position="1"/>
        <end position="139"/>
    </location>
</feature>
<gene>
    <name evidence="1" type="primary">nusB</name>
    <name type="ordered locus">ECP_0475</name>
</gene>
<reference key="1">
    <citation type="journal article" date="2006" name="Mol. Microbiol.">
        <title>Role of pathogenicity island-associated integrases in the genome plasticity of uropathogenic Escherichia coli strain 536.</title>
        <authorList>
            <person name="Hochhut B."/>
            <person name="Wilde C."/>
            <person name="Balling G."/>
            <person name="Middendorf B."/>
            <person name="Dobrindt U."/>
            <person name="Brzuszkiewicz E."/>
            <person name="Gottschalk G."/>
            <person name="Carniel E."/>
            <person name="Hacker J."/>
        </authorList>
    </citation>
    <scope>NUCLEOTIDE SEQUENCE [LARGE SCALE GENOMIC DNA]</scope>
    <source>
        <strain>536 / UPEC</strain>
    </source>
</reference>
<accession>Q0TKM5</accession>
<evidence type="ECO:0000255" key="1">
    <source>
        <dbReference type="HAMAP-Rule" id="MF_00073"/>
    </source>
</evidence>
<sequence length="139" mass="15689">MKPAARRRARECAVQALYSWQLSQNDIADVEYQFLAEQDVKDVDVLYFRELLAGVATNTAYLDGLMKPYLSRLLEELGQVEKAVLRIALYELSKRSDVPYKVAINEAIELAKSFGAEDSHKFVNGVLDKAAPVIRPNKK</sequence>
<keyword id="KW-0694">RNA-binding</keyword>
<keyword id="KW-0804">Transcription</keyword>
<keyword id="KW-0889">Transcription antitermination</keyword>
<keyword id="KW-0805">Transcription regulation</keyword>